<evidence type="ECO:0000255" key="1">
    <source>
        <dbReference type="HAMAP-Rule" id="MF_01322"/>
    </source>
</evidence>
<accession>Q2GJ69</accession>
<sequence>MKTLDLYGYTSIAQSFDKICISIASPESIRAMSYGEIKDISTTNYRTFKVEKGGLFCPKIFGPVNDDECLCGKYRKKRYRGIVCEKCGVEVTSSKVRRERMGHIELVSPVAHIWFLKSLPSRIGALLDMPLKAIENILYSGDFVVIDPVATPFAKGEVISEVVYNQARDAYGEDGFFALTGVEAIKELLTRLDLEAIRATLRNELESTSSEMKRKKVVKRLRLVENFIKSGNRPEWMILTVIPVLPPDLRPLVSLENGRPAVSDLNHHYRTIINRNNRLEKLLKLNPPAIMIRNEKRMLQEAVDALFDSSRRSYVSSRVGSMGYKKSLSDMLKGKQGRFRQNLLGKRVDYSGRSVIVVGPSLKLHQCGLPKKMALELFKPFICSKLKMYGIAPTVKLANKMIQSEKPDVWDVLDEVIKEHPILLNRAPTLHRLGLQAFDPVLIEGKAIQLHPLVCSAFNADFDGDQMAVHVPLSQEAQLEARVLMMSTNNILSPSNGRPIIVPSKDIVLGIYYLTLLEEDPEVREVQTFAEFSHVEYALHEGIVHTCSRIKYRMQKSAADGTVSSEIVETTPGRLILWQIFPQHKDLTFDLINQVLTVKEITSIVDLVYRSCGQRETVEFSDKLMYLGFKYASQSGISFGCKDMIIPDTKAAHVEDASEKIREFSIQYQDGLITKSERYNKVVDEWSKCTDLIARDMMKAISLCDEKGKYNSIYMMANSGARGSASQMKQLAGMRGLMAKPSGEIIETPIISNFREGLSVFEYFNSTHGARKGLADTALKTANSGYLTRRLVDVAQDCTVVEHDCGTSGGVVARAVIEGGVVVATLDSVVLGRVAAVDTYNPVTGEKLFTSGELIDESKLDKIRVAGLDAVKVRSPLTCESKQGICALCYGRDLAIGDLVSIGEAVGVIAAQSVGEPGTQLTMRTFHVGGTAMRGVEVSNLIALMDATVKLVNSNVVTDKYGNQIVMSRSCEVVLLDAAGNEKMRHSVPYGAKLYATEGQSVSMMEKIAEWDPYTIPIITEKTGTIKYVDLIYGVSINEVLDESTGISNRVVVDWKMHLQGANLRPRLVLLDDNGAVVTLSSDLEASYFVPIGAVLNVQDGQRVHAGDVITRIPRGSIKTRDITGGLPRVIELFEARKPKEHAIVSDVDGYVEFGKDYYRSKRRIFIRPVDKSLPVVEYLVPKGKHTIVNEGDFVHKGDLLMDGDPDQHDILRVLGTEALANYMISEIQQVYRLQGVKIDNKHIEVILRQMLQKVEITEPGDTMYLIGEHVSREEVMKLNRKLAEAGKKEVSYVPILQGITKASLDTNSFISAASFQETTKVLTEAAFAGKEDPLYGLKENVIVGRLIPAGTGFIMNKIKKLAMLDQSDYATYYNSELRGIMGDLGSSIIEEFQTPAPDGSISGSVVDY</sequence>
<name>RPOC_ANAPZ</name>
<reference key="1">
    <citation type="journal article" date="2006" name="PLoS Genet.">
        <title>Comparative genomics of emerging human ehrlichiosis agents.</title>
        <authorList>
            <person name="Dunning Hotopp J.C."/>
            <person name="Lin M."/>
            <person name="Madupu R."/>
            <person name="Crabtree J."/>
            <person name="Angiuoli S.V."/>
            <person name="Eisen J.A."/>
            <person name="Seshadri R."/>
            <person name="Ren Q."/>
            <person name="Wu M."/>
            <person name="Utterback T.R."/>
            <person name="Smith S."/>
            <person name="Lewis M."/>
            <person name="Khouri H."/>
            <person name="Zhang C."/>
            <person name="Niu H."/>
            <person name="Lin Q."/>
            <person name="Ohashi N."/>
            <person name="Zhi N."/>
            <person name="Nelson W.C."/>
            <person name="Brinkac L.M."/>
            <person name="Dodson R.J."/>
            <person name="Rosovitz M.J."/>
            <person name="Sundaram J.P."/>
            <person name="Daugherty S.C."/>
            <person name="Davidsen T."/>
            <person name="Durkin A.S."/>
            <person name="Gwinn M.L."/>
            <person name="Haft D.H."/>
            <person name="Selengut J.D."/>
            <person name="Sullivan S.A."/>
            <person name="Zafar N."/>
            <person name="Zhou L."/>
            <person name="Benahmed F."/>
            <person name="Forberger H."/>
            <person name="Halpin R."/>
            <person name="Mulligan S."/>
            <person name="Robinson J."/>
            <person name="White O."/>
            <person name="Rikihisa Y."/>
            <person name="Tettelin H."/>
        </authorList>
    </citation>
    <scope>NUCLEOTIDE SEQUENCE [LARGE SCALE GENOMIC DNA]</scope>
    <source>
        <strain>HZ</strain>
    </source>
</reference>
<comment type="function">
    <text evidence="1">DNA-dependent RNA polymerase catalyzes the transcription of DNA into RNA using the four ribonucleoside triphosphates as substrates.</text>
</comment>
<comment type="catalytic activity">
    <reaction evidence="1">
        <text>RNA(n) + a ribonucleoside 5'-triphosphate = RNA(n+1) + diphosphate</text>
        <dbReference type="Rhea" id="RHEA:21248"/>
        <dbReference type="Rhea" id="RHEA-COMP:14527"/>
        <dbReference type="Rhea" id="RHEA-COMP:17342"/>
        <dbReference type="ChEBI" id="CHEBI:33019"/>
        <dbReference type="ChEBI" id="CHEBI:61557"/>
        <dbReference type="ChEBI" id="CHEBI:140395"/>
        <dbReference type="EC" id="2.7.7.6"/>
    </reaction>
</comment>
<comment type="cofactor">
    <cofactor evidence="1">
        <name>Mg(2+)</name>
        <dbReference type="ChEBI" id="CHEBI:18420"/>
    </cofactor>
    <text evidence="1">Binds 1 Mg(2+) ion per subunit.</text>
</comment>
<comment type="cofactor">
    <cofactor evidence="1">
        <name>Zn(2+)</name>
        <dbReference type="ChEBI" id="CHEBI:29105"/>
    </cofactor>
    <text evidence="1">Binds 2 Zn(2+) ions per subunit.</text>
</comment>
<comment type="subunit">
    <text evidence="1">The RNAP catalytic core consists of 2 alpha, 1 beta, 1 beta' and 1 omega subunit. When a sigma factor is associated with the core the holoenzyme is formed, which can initiate transcription.</text>
</comment>
<comment type="similarity">
    <text evidence="1">Belongs to the RNA polymerase beta' chain family.</text>
</comment>
<keyword id="KW-0240">DNA-directed RNA polymerase</keyword>
<keyword id="KW-0460">Magnesium</keyword>
<keyword id="KW-0479">Metal-binding</keyword>
<keyword id="KW-0548">Nucleotidyltransferase</keyword>
<keyword id="KW-0804">Transcription</keyword>
<keyword id="KW-0808">Transferase</keyword>
<keyword id="KW-0862">Zinc</keyword>
<organism>
    <name type="scientific">Anaplasma phagocytophilum (strain HZ)</name>
    <dbReference type="NCBI Taxonomy" id="212042"/>
    <lineage>
        <taxon>Bacteria</taxon>
        <taxon>Pseudomonadati</taxon>
        <taxon>Pseudomonadota</taxon>
        <taxon>Alphaproteobacteria</taxon>
        <taxon>Rickettsiales</taxon>
        <taxon>Anaplasmataceae</taxon>
        <taxon>Anaplasma</taxon>
        <taxon>phagocytophilum group</taxon>
    </lineage>
</organism>
<gene>
    <name evidence="1" type="primary">rpoC</name>
    <name type="ordered locus">APH_1023</name>
</gene>
<proteinExistence type="inferred from homology"/>
<feature type="chain" id="PRO_0000240795" description="DNA-directed RNA polymerase subunit beta'">
    <location>
        <begin position="1"/>
        <end position="1409"/>
    </location>
</feature>
<feature type="binding site" evidence="1">
    <location>
        <position position="69"/>
    </location>
    <ligand>
        <name>Zn(2+)</name>
        <dbReference type="ChEBI" id="CHEBI:29105"/>
        <label>1</label>
    </ligand>
</feature>
<feature type="binding site" evidence="1">
    <location>
        <position position="71"/>
    </location>
    <ligand>
        <name>Zn(2+)</name>
        <dbReference type="ChEBI" id="CHEBI:29105"/>
        <label>1</label>
    </ligand>
</feature>
<feature type="binding site" evidence="1">
    <location>
        <position position="84"/>
    </location>
    <ligand>
        <name>Zn(2+)</name>
        <dbReference type="ChEBI" id="CHEBI:29105"/>
        <label>1</label>
    </ligand>
</feature>
<feature type="binding site" evidence="1">
    <location>
        <position position="87"/>
    </location>
    <ligand>
        <name>Zn(2+)</name>
        <dbReference type="ChEBI" id="CHEBI:29105"/>
        <label>1</label>
    </ligand>
</feature>
<feature type="binding site" evidence="1">
    <location>
        <position position="461"/>
    </location>
    <ligand>
        <name>Mg(2+)</name>
        <dbReference type="ChEBI" id="CHEBI:18420"/>
    </ligand>
</feature>
<feature type="binding site" evidence="1">
    <location>
        <position position="463"/>
    </location>
    <ligand>
        <name>Mg(2+)</name>
        <dbReference type="ChEBI" id="CHEBI:18420"/>
    </ligand>
</feature>
<feature type="binding site" evidence="1">
    <location>
        <position position="465"/>
    </location>
    <ligand>
        <name>Mg(2+)</name>
        <dbReference type="ChEBI" id="CHEBI:18420"/>
    </ligand>
</feature>
<feature type="binding site" evidence="1">
    <location>
        <position position="805"/>
    </location>
    <ligand>
        <name>Zn(2+)</name>
        <dbReference type="ChEBI" id="CHEBI:29105"/>
        <label>2</label>
    </ligand>
</feature>
<feature type="binding site" evidence="1">
    <location>
        <position position="879"/>
    </location>
    <ligand>
        <name>Zn(2+)</name>
        <dbReference type="ChEBI" id="CHEBI:29105"/>
        <label>2</label>
    </ligand>
</feature>
<feature type="binding site" evidence="1">
    <location>
        <position position="886"/>
    </location>
    <ligand>
        <name>Zn(2+)</name>
        <dbReference type="ChEBI" id="CHEBI:29105"/>
        <label>2</label>
    </ligand>
</feature>
<feature type="binding site" evidence="1">
    <location>
        <position position="889"/>
    </location>
    <ligand>
        <name>Zn(2+)</name>
        <dbReference type="ChEBI" id="CHEBI:29105"/>
        <label>2</label>
    </ligand>
</feature>
<dbReference type="EC" id="2.7.7.6" evidence="1"/>
<dbReference type="EMBL" id="CP000235">
    <property type="protein sequence ID" value="ABD43638.1"/>
    <property type="molecule type" value="Genomic_DNA"/>
</dbReference>
<dbReference type="RefSeq" id="WP_011451095.1">
    <property type="nucleotide sequence ID" value="NC_007797.1"/>
</dbReference>
<dbReference type="SMR" id="Q2GJ69"/>
<dbReference type="STRING" id="212042.APH_1023"/>
<dbReference type="PaxDb" id="212042-APH_1023"/>
<dbReference type="EnsemblBacteria" id="ABD43638">
    <property type="protein sequence ID" value="ABD43638"/>
    <property type="gene ID" value="APH_1023"/>
</dbReference>
<dbReference type="GeneID" id="92748045"/>
<dbReference type="KEGG" id="aph:APH_1023"/>
<dbReference type="eggNOG" id="COG0086">
    <property type="taxonomic scope" value="Bacteria"/>
</dbReference>
<dbReference type="HOGENOM" id="CLU_000524_3_1_5"/>
<dbReference type="Proteomes" id="UP000001943">
    <property type="component" value="Chromosome"/>
</dbReference>
<dbReference type="GO" id="GO:0000428">
    <property type="term" value="C:DNA-directed RNA polymerase complex"/>
    <property type="evidence" value="ECO:0007669"/>
    <property type="project" value="UniProtKB-KW"/>
</dbReference>
<dbReference type="GO" id="GO:0003677">
    <property type="term" value="F:DNA binding"/>
    <property type="evidence" value="ECO:0007669"/>
    <property type="project" value="UniProtKB-UniRule"/>
</dbReference>
<dbReference type="GO" id="GO:0003899">
    <property type="term" value="F:DNA-directed RNA polymerase activity"/>
    <property type="evidence" value="ECO:0007669"/>
    <property type="project" value="UniProtKB-UniRule"/>
</dbReference>
<dbReference type="GO" id="GO:0000287">
    <property type="term" value="F:magnesium ion binding"/>
    <property type="evidence" value="ECO:0007669"/>
    <property type="project" value="UniProtKB-UniRule"/>
</dbReference>
<dbReference type="GO" id="GO:0008270">
    <property type="term" value="F:zinc ion binding"/>
    <property type="evidence" value="ECO:0007669"/>
    <property type="project" value="UniProtKB-UniRule"/>
</dbReference>
<dbReference type="GO" id="GO:0006351">
    <property type="term" value="P:DNA-templated transcription"/>
    <property type="evidence" value="ECO:0007669"/>
    <property type="project" value="UniProtKB-UniRule"/>
</dbReference>
<dbReference type="CDD" id="cd02655">
    <property type="entry name" value="RNAP_beta'_C"/>
    <property type="match status" value="1"/>
</dbReference>
<dbReference type="CDD" id="cd01609">
    <property type="entry name" value="RNAP_beta'_N"/>
    <property type="match status" value="1"/>
</dbReference>
<dbReference type="Gene3D" id="1.10.132.30">
    <property type="match status" value="1"/>
</dbReference>
<dbReference type="Gene3D" id="1.10.150.390">
    <property type="match status" value="1"/>
</dbReference>
<dbReference type="Gene3D" id="1.10.1790.20">
    <property type="match status" value="1"/>
</dbReference>
<dbReference type="Gene3D" id="1.10.40.90">
    <property type="match status" value="1"/>
</dbReference>
<dbReference type="Gene3D" id="2.40.40.20">
    <property type="match status" value="1"/>
</dbReference>
<dbReference type="Gene3D" id="2.40.50.100">
    <property type="match status" value="3"/>
</dbReference>
<dbReference type="Gene3D" id="4.10.860.120">
    <property type="entry name" value="RNA polymerase II, clamp domain"/>
    <property type="match status" value="1"/>
</dbReference>
<dbReference type="Gene3D" id="1.10.274.100">
    <property type="entry name" value="RNA polymerase Rpb1, domain 3"/>
    <property type="match status" value="2"/>
</dbReference>
<dbReference type="HAMAP" id="MF_01322">
    <property type="entry name" value="RNApol_bact_RpoC"/>
    <property type="match status" value="1"/>
</dbReference>
<dbReference type="InterPro" id="IPR045867">
    <property type="entry name" value="DNA-dir_RpoC_beta_prime"/>
</dbReference>
<dbReference type="InterPro" id="IPR012754">
    <property type="entry name" value="DNA-dir_RpoC_beta_prime_bact"/>
</dbReference>
<dbReference type="InterPro" id="IPR000722">
    <property type="entry name" value="RNA_pol_asu"/>
</dbReference>
<dbReference type="InterPro" id="IPR006592">
    <property type="entry name" value="RNA_pol_N"/>
</dbReference>
<dbReference type="InterPro" id="IPR007080">
    <property type="entry name" value="RNA_pol_Rpb1_1"/>
</dbReference>
<dbReference type="InterPro" id="IPR007066">
    <property type="entry name" value="RNA_pol_Rpb1_3"/>
</dbReference>
<dbReference type="InterPro" id="IPR042102">
    <property type="entry name" value="RNA_pol_Rpb1_3_sf"/>
</dbReference>
<dbReference type="InterPro" id="IPR007083">
    <property type="entry name" value="RNA_pol_Rpb1_4"/>
</dbReference>
<dbReference type="InterPro" id="IPR007081">
    <property type="entry name" value="RNA_pol_Rpb1_5"/>
</dbReference>
<dbReference type="InterPro" id="IPR044893">
    <property type="entry name" value="RNA_pol_Rpb1_clamp_domain"/>
</dbReference>
<dbReference type="InterPro" id="IPR038120">
    <property type="entry name" value="Rpb1_funnel_sf"/>
</dbReference>
<dbReference type="NCBIfam" id="TIGR02386">
    <property type="entry name" value="rpoC_TIGR"/>
    <property type="match status" value="1"/>
</dbReference>
<dbReference type="PANTHER" id="PTHR19376">
    <property type="entry name" value="DNA-DIRECTED RNA POLYMERASE"/>
    <property type="match status" value="1"/>
</dbReference>
<dbReference type="PANTHER" id="PTHR19376:SF54">
    <property type="entry name" value="DNA-DIRECTED RNA POLYMERASE SUBUNIT BETA"/>
    <property type="match status" value="1"/>
</dbReference>
<dbReference type="Pfam" id="PF04997">
    <property type="entry name" value="RNA_pol_Rpb1_1"/>
    <property type="match status" value="1"/>
</dbReference>
<dbReference type="Pfam" id="PF00623">
    <property type="entry name" value="RNA_pol_Rpb1_2"/>
    <property type="match status" value="1"/>
</dbReference>
<dbReference type="Pfam" id="PF04983">
    <property type="entry name" value="RNA_pol_Rpb1_3"/>
    <property type="match status" value="1"/>
</dbReference>
<dbReference type="Pfam" id="PF05000">
    <property type="entry name" value="RNA_pol_Rpb1_4"/>
    <property type="match status" value="1"/>
</dbReference>
<dbReference type="Pfam" id="PF04998">
    <property type="entry name" value="RNA_pol_Rpb1_5"/>
    <property type="match status" value="1"/>
</dbReference>
<dbReference type="SMART" id="SM00663">
    <property type="entry name" value="RPOLA_N"/>
    <property type="match status" value="1"/>
</dbReference>
<dbReference type="SUPFAM" id="SSF64484">
    <property type="entry name" value="beta and beta-prime subunits of DNA dependent RNA-polymerase"/>
    <property type="match status" value="1"/>
</dbReference>
<protein>
    <recommendedName>
        <fullName evidence="1">DNA-directed RNA polymerase subunit beta'</fullName>
        <shortName evidence="1">RNAP subunit beta'</shortName>
        <ecNumber evidence="1">2.7.7.6</ecNumber>
    </recommendedName>
    <alternativeName>
        <fullName evidence="1">RNA polymerase subunit beta'</fullName>
    </alternativeName>
    <alternativeName>
        <fullName evidence="1">Transcriptase subunit beta'</fullName>
    </alternativeName>
</protein>